<comment type="function">
    <text evidence="1">Catalyzes the GTP-dependent ribosomal translocation step during translation elongation. During this step, the ribosome changes from the pre-translocational (PRE) to the post-translocational (POST) state as the newly formed A-site-bound peptidyl-tRNA and P-site-bound deacylated tRNA move to the P and E sites, respectively. Catalyzes the coordinated movement of the two tRNA molecules, the mRNA and conformational changes in the ribosome.</text>
</comment>
<comment type="subcellular location">
    <subcellularLocation>
        <location evidence="1">Cytoplasm</location>
    </subcellularLocation>
</comment>
<comment type="similarity">
    <text evidence="1">Belongs to the TRAFAC class translation factor GTPase superfamily. Classic translation factor GTPase family. EF-G/EF-2 subfamily.</text>
</comment>
<gene>
    <name evidence="1" type="primary">fusA</name>
    <name type="ordered locus">VV1_1338</name>
</gene>
<accession>Q8DCQ8</accession>
<name>EFG_VIBVU</name>
<sequence length="699" mass="77413">MARKTPIERYRNIGICAHVDAGKTTTTERILFYTGLSHKIGEVHDGAATMDWMEQEQERGITITSAATTTFWRGMEAQFQDHRVNIIDTPGHVDFTIEVERSLRVLDGAVVVFCGSSGVEPQSETVWRQADKYHVPRMVFVNKMDRAGADFLRVVDQIKNRLGANPVPIQLNVGAEEDFKGVIDLIKMKMINWNEADQGMTFTYEEIPADMIELAEEWRNNLVEAAAEASEELMDKYLEEGELTEAEIKQALRARTLNNEIVLATCGSAFKNKGVQAVLDAVIEYLPSPIDVPAIKGIDENDNEVERHADDNEPFSALAFKIATDPFVGTLTFIRVYSGVVNTGDAVYNSVKQKKERFGRIVQMHANKREEIKEVRAGDIAAAIGLKDVTTGDTLCNSDHKVILERMEFPEPVIQIAVEPRSKADQEKMGIALGKLAAEDPSFRVETDAETGQTLISGMGELHLDIIVDRMKREFSVDCNVGKPQVAYRETIRGKSEVEGKFVRQSGGRGQYGHVWIKLEPSEPGAGFVFVDEVVGGVIPKEYISSVAKGIEEQMNSGVLAGYPVLDIKATLFDGSYHDVDSSEMAFKIAGSMAFKKGALEAQPVILEPMMKVEVTTPEDWMGDVVGDLNRRRGIIEGMDEGVAGLKIIRAQVPLSEMFGYATDLRSATQGRASYSMEFFEYAEVPKNIAEAIVAERGY</sequence>
<reference key="1">
    <citation type="submission" date="2002-12" db="EMBL/GenBank/DDBJ databases">
        <title>Complete genome sequence of Vibrio vulnificus CMCP6.</title>
        <authorList>
            <person name="Rhee J.H."/>
            <person name="Kim S.Y."/>
            <person name="Chung S.S."/>
            <person name="Kim J.J."/>
            <person name="Moon Y.H."/>
            <person name="Jeong H."/>
            <person name="Choy H.E."/>
        </authorList>
    </citation>
    <scope>NUCLEOTIDE SEQUENCE [LARGE SCALE GENOMIC DNA]</scope>
    <source>
        <strain>CMCP6</strain>
    </source>
</reference>
<feature type="chain" id="PRO_0000091263" description="Elongation factor G">
    <location>
        <begin position="1"/>
        <end position="699"/>
    </location>
</feature>
<feature type="domain" description="tr-type G">
    <location>
        <begin position="8"/>
        <end position="290"/>
    </location>
</feature>
<feature type="binding site" evidence="1">
    <location>
        <begin position="17"/>
        <end position="24"/>
    </location>
    <ligand>
        <name>GTP</name>
        <dbReference type="ChEBI" id="CHEBI:37565"/>
    </ligand>
</feature>
<feature type="binding site" evidence="1">
    <location>
        <begin position="88"/>
        <end position="92"/>
    </location>
    <ligand>
        <name>GTP</name>
        <dbReference type="ChEBI" id="CHEBI:37565"/>
    </ligand>
</feature>
<feature type="binding site" evidence="1">
    <location>
        <begin position="142"/>
        <end position="145"/>
    </location>
    <ligand>
        <name>GTP</name>
        <dbReference type="ChEBI" id="CHEBI:37565"/>
    </ligand>
</feature>
<feature type="helix" evidence="2">
    <location>
        <begin position="7"/>
        <end position="9"/>
    </location>
</feature>
<feature type="strand" evidence="2">
    <location>
        <begin position="10"/>
        <end position="16"/>
    </location>
</feature>
<feature type="helix" evidence="2">
    <location>
        <begin position="24"/>
        <end position="37"/>
    </location>
</feature>
<feature type="strand" evidence="2">
    <location>
        <begin position="66"/>
        <end position="72"/>
    </location>
</feature>
<feature type="strand" evidence="2">
    <location>
        <begin position="82"/>
        <end position="87"/>
    </location>
</feature>
<feature type="helix" evidence="2">
    <location>
        <begin position="99"/>
        <end position="105"/>
    </location>
</feature>
<feature type="strand" evidence="2">
    <location>
        <begin position="107"/>
        <end position="114"/>
    </location>
</feature>
<feature type="turn" evidence="2">
    <location>
        <begin position="115"/>
        <end position="117"/>
    </location>
</feature>
<feature type="helix" evidence="2">
    <location>
        <begin position="124"/>
        <end position="132"/>
    </location>
</feature>
<feature type="strand" evidence="2">
    <location>
        <begin position="137"/>
        <end position="142"/>
    </location>
</feature>
<feature type="helix" evidence="2">
    <location>
        <begin position="151"/>
        <end position="162"/>
    </location>
</feature>
<feature type="strand" evidence="2">
    <location>
        <begin position="166"/>
        <end position="174"/>
    </location>
</feature>
<feature type="helix" evidence="2">
    <location>
        <begin position="176"/>
        <end position="178"/>
    </location>
</feature>
<feature type="strand" evidence="2">
    <location>
        <begin position="181"/>
        <end position="184"/>
    </location>
</feature>
<feature type="turn" evidence="2">
    <location>
        <begin position="185"/>
        <end position="188"/>
    </location>
</feature>
<feature type="strand" evidence="2">
    <location>
        <begin position="189"/>
        <end position="193"/>
    </location>
</feature>
<feature type="turn" evidence="2">
    <location>
        <begin position="195"/>
        <end position="198"/>
    </location>
</feature>
<feature type="strand" evidence="2">
    <location>
        <begin position="199"/>
        <end position="205"/>
    </location>
</feature>
<feature type="helix" evidence="2">
    <location>
        <begin position="209"/>
        <end position="211"/>
    </location>
</feature>
<feature type="helix" evidence="2">
    <location>
        <begin position="212"/>
        <end position="227"/>
    </location>
</feature>
<feature type="helix" evidence="2">
    <location>
        <begin position="231"/>
        <end position="240"/>
    </location>
</feature>
<feature type="helix" evidence="2">
    <location>
        <begin position="245"/>
        <end position="257"/>
    </location>
</feature>
<feature type="strand" evidence="2">
    <location>
        <begin position="262"/>
        <end position="266"/>
    </location>
</feature>
<feature type="turn" evidence="2">
    <location>
        <begin position="269"/>
        <end position="272"/>
    </location>
</feature>
<feature type="helix" evidence="2">
    <location>
        <begin position="275"/>
        <end position="285"/>
    </location>
</feature>
<feature type="strand" evidence="2">
    <location>
        <begin position="295"/>
        <end position="298"/>
    </location>
</feature>
<feature type="strand" evidence="2">
    <location>
        <begin position="304"/>
        <end position="307"/>
    </location>
</feature>
<feature type="strand" evidence="2">
    <location>
        <begin position="316"/>
        <end position="325"/>
    </location>
</feature>
<feature type="turn" evidence="2">
    <location>
        <begin position="326"/>
        <end position="328"/>
    </location>
</feature>
<feature type="strand" evidence="2">
    <location>
        <begin position="329"/>
        <end position="342"/>
    </location>
</feature>
<feature type="strand" evidence="2">
    <location>
        <begin position="346"/>
        <end position="349"/>
    </location>
</feature>
<feature type="turn" evidence="2">
    <location>
        <begin position="350"/>
        <end position="353"/>
    </location>
</feature>
<feature type="strand" evidence="2">
    <location>
        <begin position="354"/>
        <end position="357"/>
    </location>
</feature>
<feature type="strand" evidence="2">
    <location>
        <begin position="361"/>
        <end position="367"/>
    </location>
</feature>
<feature type="strand" evidence="2">
    <location>
        <begin position="369"/>
        <end position="376"/>
    </location>
</feature>
<feature type="strand" evidence="2">
    <location>
        <begin position="380"/>
        <end position="385"/>
    </location>
</feature>
<feature type="strand" evidence="2">
    <location>
        <begin position="394"/>
        <end position="396"/>
    </location>
</feature>
<keyword id="KW-0002">3D-structure</keyword>
<keyword id="KW-0963">Cytoplasm</keyword>
<keyword id="KW-0251">Elongation factor</keyword>
<keyword id="KW-0342">GTP-binding</keyword>
<keyword id="KW-0547">Nucleotide-binding</keyword>
<keyword id="KW-0648">Protein biosynthesis</keyword>
<protein>
    <recommendedName>
        <fullName evidence="1">Elongation factor G</fullName>
        <shortName evidence="1">EF-G</shortName>
    </recommendedName>
</protein>
<dbReference type="EMBL" id="AE016795">
    <property type="protein sequence ID" value="AAO09792.1"/>
    <property type="molecule type" value="Genomic_DNA"/>
</dbReference>
<dbReference type="RefSeq" id="WP_011079317.1">
    <property type="nucleotide sequence ID" value="NC_004459.3"/>
</dbReference>
<dbReference type="PDB" id="5TV2">
    <property type="method" value="X-ray"/>
    <property type="resolution" value="1.60 A"/>
    <property type="chains" value="A=1-405"/>
</dbReference>
<dbReference type="PDBsum" id="5TV2"/>
<dbReference type="SMR" id="Q8DCQ8"/>
<dbReference type="KEGG" id="vvu:VV1_1338"/>
<dbReference type="PATRIC" id="fig|196600.6.peg.3007"/>
<dbReference type="HOGENOM" id="CLU_002794_4_1_6"/>
<dbReference type="Proteomes" id="UP000002275">
    <property type="component" value="Chromosome 1"/>
</dbReference>
<dbReference type="GO" id="GO:0005737">
    <property type="term" value="C:cytoplasm"/>
    <property type="evidence" value="ECO:0007669"/>
    <property type="project" value="UniProtKB-SubCell"/>
</dbReference>
<dbReference type="GO" id="GO:0005525">
    <property type="term" value="F:GTP binding"/>
    <property type="evidence" value="ECO:0007669"/>
    <property type="project" value="UniProtKB-UniRule"/>
</dbReference>
<dbReference type="GO" id="GO:0003924">
    <property type="term" value="F:GTPase activity"/>
    <property type="evidence" value="ECO:0007669"/>
    <property type="project" value="InterPro"/>
</dbReference>
<dbReference type="GO" id="GO:0097216">
    <property type="term" value="F:guanosine tetraphosphate binding"/>
    <property type="evidence" value="ECO:0007669"/>
    <property type="project" value="UniProtKB-ARBA"/>
</dbReference>
<dbReference type="GO" id="GO:0003746">
    <property type="term" value="F:translation elongation factor activity"/>
    <property type="evidence" value="ECO:0007669"/>
    <property type="project" value="UniProtKB-UniRule"/>
</dbReference>
<dbReference type="GO" id="GO:0032790">
    <property type="term" value="P:ribosome disassembly"/>
    <property type="evidence" value="ECO:0007669"/>
    <property type="project" value="TreeGrafter"/>
</dbReference>
<dbReference type="CDD" id="cd01886">
    <property type="entry name" value="EF-G"/>
    <property type="match status" value="1"/>
</dbReference>
<dbReference type="CDD" id="cd16262">
    <property type="entry name" value="EFG_III"/>
    <property type="match status" value="1"/>
</dbReference>
<dbReference type="CDD" id="cd01434">
    <property type="entry name" value="EFG_mtEFG1_IV"/>
    <property type="match status" value="1"/>
</dbReference>
<dbReference type="CDD" id="cd03713">
    <property type="entry name" value="EFG_mtEFG_C"/>
    <property type="match status" value="1"/>
</dbReference>
<dbReference type="CDD" id="cd04088">
    <property type="entry name" value="EFG_mtEFG_II"/>
    <property type="match status" value="1"/>
</dbReference>
<dbReference type="FunFam" id="2.40.30.10:FF:000006">
    <property type="entry name" value="Elongation factor G"/>
    <property type="match status" value="1"/>
</dbReference>
<dbReference type="FunFam" id="3.30.230.10:FF:000003">
    <property type="entry name" value="Elongation factor G"/>
    <property type="match status" value="1"/>
</dbReference>
<dbReference type="FunFam" id="3.30.70.240:FF:000001">
    <property type="entry name" value="Elongation factor G"/>
    <property type="match status" value="1"/>
</dbReference>
<dbReference type="FunFam" id="3.30.70.870:FF:000001">
    <property type="entry name" value="Elongation factor G"/>
    <property type="match status" value="1"/>
</dbReference>
<dbReference type="FunFam" id="3.40.50.300:FF:000029">
    <property type="entry name" value="Elongation factor G"/>
    <property type="match status" value="1"/>
</dbReference>
<dbReference type="Gene3D" id="3.30.230.10">
    <property type="match status" value="1"/>
</dbReference>
<dbReference type="Gene3D" id="3.30.70.240">
    <property type="match status" value="1"/>
</dbReference>
<dbReference type="Gene3D" id="3.30.70.870">
    <property type="entry name" value="Elongation Factor G (Translational Gtpase), domain 3"/>
    <property type="match status" value="1"/>
</dbReference>
<dbReference type="Gene3D" id="3.40.50.300">
    <property type="entry name" value="P-loop containing nucleotide triphosphate hydrolases"/>
    <property type="match status" value="1"/>
</dbReference>
<dbReference type="Gene3D" id="2.40.30.10">
    <property type="entry name" value="Translation factors"/>
    <property type="match status" value="1"/>
</dbReference>
<dbReference type="HAMAP" id="MF_00054_B">
    <property type="entry name" value="EF_G_EF_2_B"/>
    <property type="match status" value="1"/>
</dbReference>
<dbReference type="InterPro" id="IPR041095">
    <property type="entry name" value="EFG_II"/>
</dbReference>
<dbReference type="InterPro" id="IPR009022">
    <property type="entry name" value="EFG_III"/>
</dbReference>
<dbReference type="InterPro" id="IPR035647">
    <property type="entry name" value="EFG_III/V"/>
</dbReference>
<dbReference type="InterPro" id="IPR047872">
    <property type="entry name" value="EFG_IV"/>
</dbReference>
<dbReference type="InterPro" id="IPR035649">
    <property type="entry name" value="EFG_V"/>
</dbReference>
<dbReference type="InterPro" id="IPR000640">
    <property type="entry name" value="EFG_V-like"/>
</dbReference>
<dbReference type="InterPro" id="IPR004161">
    <property type="entry name" value="EFTu-like_2"/>
</dbReference>
<dbReference type="InterPro" id="IPR031157">
    <property type="entry name" value="G_TR_CS"/>
</dbReference>
<dbReference type="InterPro" id="IPR027417">
    <property type="entry name" value="P-loop_NTPase"/>
</dbReference>
<dbReference type="InterPro" id="IPR020568">
    <property type="entry name" value="Ribosomal_Su5_D2-typ_SF"/>
</dbReference>
<dbReference type="InterPro" id="IPR014721">
    <property type="entry name" value="Ribsml_uS5_D2-typ_fold_subgr"/>
</dbReference>
<dbReference type="InterPro" id="IPR005225">
    <property type="entry name" value="Small_GTP-bd"/>
</dbReference>
<dbReference type="InterPro" id="IPR000795">
    <property type="entry name" value="T_Tr_GTP-bd_dom"/>
</dbReference>
<dbReference type="InterPro" id="IPR009000">
    <property type="entry name" value="Transl_B-barrel_sf"/>
</dbReference>
<dbReference type="InterPro" id="IPR004540">
    <property type="entry name" value="Transl_elong_EFG/EF2"/>
</dbReference>
<dbReference type="InterPro" id="IPR005517">
    <property type="entry name" value="Transl_elong_EFG/EF2_IV"/>
</dbReference>
<dbReference type="NCBIfam" id="TIGR00484">
    <property type="entry name" value="EF-G"/>
    <property type="match status" value="1"/>
</dbReference>
<dbReference type="NCBIfam" id="NF009381">
    <property type="entry name" value="PRK12740.1-5"/>
    <property type="match status" value="1"/>
</dbReference>
<dbReference type="NCBIfam" id="TIGR00231">
    <property type="entry name" value="small_GTP"/>
    <property type="match status" value="1"/>
</dbReference>
<dbReference type="PANTHER" id="PTHR43261:SF1">
    <property type="entry name" value="RIBOSOME-RELEASING FACTOR 2, MITOCHONDRIAL"/>
    <property type="match status" value="1"/>
</dbReference>
<dbReference type="PANTHER" id="PTHR43261">
    <property type="entry name" value="TRANSLATION ELONGATION FACTOR G-RELATED"/>
    <property type="match status" value="1"/>
</dbReference>
<dbReference type="Pfam" id="PF00679">
    <property type="entry name" value="EFG_C"/>
    <property type="match status" value="1"/>
</dbReference>
<dbReference type="Pfam" id="PF14492">
    <property type="entry name" value="EFG_III"/>
    <property type="match status" value="1"/>
</dbReference>
<dbReference type="Pfam" id="PF03764">
    <property type="entry name" value="EFG_IV"/>
    <property type="match status" value="1"/>
</dbReference>
<dbReference type="Pfam" id="PF00009">
    <property type="entry name" value="GTP_EFTU"/>
    <property type="match status" value="1"/>
</dbReference>
<dbReference type="Pfam" id="PF03144">
    <property type="entry name" value="GTP_EFTU_D2"/>
    <property type="match status" value="1"/>
</dbReference>
<dbReference type="PRINTS" id="PR00315">
    <property type="entry name" value="ELONGATNFCT"/>
</dbReference>
<dbReference type="SMART" id="SM00838">
    <property type="entry name" value="EFG_C"/>
    <property type="match status" value="1"/>
</dbReference>
<dbReference type="SMART" id="SM00889">
    <property type="entry name" value="EFG_IV"/>
    <property type="match status" value="1"/>
</dbReference>
<dbReference type="SUPFAM" id="SSF54980">
    <property type="entry name" value="EF-G C-terminal domain-like"/>
    <property type="match status" value="2"/>
</dbReference>
<dbReference type="SUPFAM" id="SSF52540">
    <property type="entry name" value="P-loop containing nucleoside triphosphate hydrolases"/>
    <property type="match status" value="1"/>
</dbReference>
<dbReference type="SUPFAM" id="SSF54211">
    <property type="entry name" value="Ribosomal protein S5 domain 2-like"/>
    <property type="match status" value="1"/>
</dbReference>
<dbReference type="SUPFAM" id="SSF50447">
    <property type="entry name" value="Translation proteins"/>
    <property type="match status" value="1"/>
</dbReference>
<dbReference type="PROSITE" id="PS00301">
    <property type="entry name" value="G_TR_1"/>
    <property type="match status" value="1"/>
</dbReference>
<dbReference type="PROSITE" id="PS51722">
    <property type="entry name" value="G_TR_2"/>
    <property type="match status" value="1"/>
</dbReference>
<proteinExistence type="evidence at protein level"/>
<organism>
    <name type="scientific">Vibrio vulnificus (strain CMCP6)</name>
    <dbReference type="NCBI Taxonomy" id="216895"/>
    <lineage>
        <taxon>Bacteria</taxon>
        <taxon>Pseudomonadati</taxon>
        <taxon>Pseudomonadota</taxon>
        <taxon>Gammaproteobacteria</taxon>
        <taxon>Vibrionales</taxon>
        <taxon>Vibrionaceae</taxon>
        <taxon>Vibrio</taxon>
    </lineage>
</organism>
<evidence type="ECO:0000255" key="1">
    <source>
        <dbReference type="HAMAP-Rule" id="MF_00054"/>
    </source>
</evidence>
<evidence type="ECO:0007829" key="2">
    <source>
        <dbReference type="PDB" id="5TV2"/>
    </source>
</evidence>